<sequence>MAAVTNADVEAVDFDPDDDDLMDEDAADPTPAPAPRLRSTIAGGGGGGGGGDDGQRKTKGRGFRDDAAPRDSRLAGAGRASDFDSLGSDGGPGPVRSIEGWIVLVTGVHEEAQEDDLHNIFRDFGQVKNLHLNLDRRTGFVKGYALIEYETFEEAQAAIKALDGTELLTQIISVDWAFSNGPVKRRNIRKRSPRRSRSPPRRRY</sequence>
<organism>
    <name type="scientific">Oryza sativa subsp. japonica</name>
    <name type="common">Rice</name>
    <dbReference type="NCBI Taxonomy" id="39947"/>
    <lineage>
        <taxon>Eukaryota</taxon>
        <taxon>Viridiplantae</taxon>
        <taxon>Streptophyta</taxon>
        <taxon>Embryophyta</taxon>
        <taxon>Tracheophyta</taxon>
        <taxon>Spermatophyta</taxon>
        <taxon>Magnoliopsida</taxon>
        <taxon>Liliopsida</taxon>
        <taxon>Poales</taxon>
        <taxon>Poaceae</taxon>
        <taxon>BOP clade</taxon>
        <taxon>Oryzoideae</taxon>
        <taxon>Oryzeae</taxon>
        <taxon>Oryzinae</taxon>
        <taxon>Oryza</taxon>
        <taxon>Oryza sativa</taxon>
    </lineage>
</organism>
<proteinExistence type="evidence at protein level"/>
<reference key="1">
    <citation type="journal article" date="2014" name="PLoS ONE">
        <title>Slow co-evolution of the MAGO and Y14 protein families is required for the maintenance of their obligate heterodimerization mode.</title>
        <authorList>
            <person name="Gong P."/>
            <person name="Zhao M."/>
            <person name="He C."/>
        </authorList>
    </citation>
    <scope>NUCLEOTIDE SEQUENCE [MRNA] (ISOFORM 3)</scope>
    <scope>INTERACTION WITH MAGO1 AND MAGO2</scope>
</reference>
<reference key="2">
    <citation type="journal article" date="2005" name="Mol. Genet. Genomics">
        <title>A fine physical map of the rice chromosome 5.</title>
        <authorList>
            <person name="Cheng C.-H."/>
            <person name="Chung M.C."/>
            <person name="Liu S.-M."/>
            <person name="Chen S.-K."/>
            <person name="Kao F.Y."/>
            <person name="Lin S.-J."/>
            <person name="Hsiao S.-H."/>
            <person name="Tseng I.C."/>
            <person name="Hsing Y.-I.C."/>
            <person name="Wu H.-P."/>
            <person name="Chen C.-S."/>
            <person name="Shaw J.-F."/>
            <person name="Wu J."/>
            <person name="Matsumoto T."/>
            <person name="Sasaki T."/>
            <person name="Chen H.-C."/>
            <person name="Chow T.-Y."/>
        </authorList>
    </citation>
    <scope>NUCLEOTIDE SEQUENCE [LARGE SCALE GENOMIC DNA]</scope>
    <source>
        <strain>cv. Nipponbare</strain>
    </source>
</reference>
<reference key="3">
    <citation type="journal article" date="2005" name="Nature">
        <title>The map-based sequence of the rice genome.</title>
        <authorList>
            <consortium name="International rice genome sequencing project (IRGSP)"/>
        </authorList>
    </citation>
    <scope>NUCLEOTIDE SEQUENCE [LARGE SCALE GENOMIC DNA]</scope>
    <source>
        <strain>cv. Nipponbare</strain>
    </source>
</reference>
<reference key="4">
    <citation type="journal article" date="2008" name="Nucleic Acids Res.">
        <title>The rice annotation project database (RAP-DB): 2008 update.</title>
        <authorList>
            <consortium name="The rice annotation project (RAP)"/>
        </authorList>
    </citation>
    <scope>GENOME REANNOTATION</scope>
    <source>
        <strain>cv. Nipponbare</strain>
    </source>
</reference>
<reference key="5">
    <citation type="journal article" date="2013" name="Rice">
        <title>Improvement of the Oryza sativa Nipponbare reference genome using next generation sequence and optical map data.</title>
        <authorList>
            <person name="Kawahara Y."/>
            <person name="de la Bastide M."/>
            <person name="Hamilton J.P."/>
            <person name="Kanamori H."/>
            <person name="McCombie W.R."/>
            <person name="Ouyang S."/>
            <person name="Schwartz D.C."/>
            <person name="Tanaka T."/>
            <person name="Wu J."/>
            <person name="Zhou S."/>
            <person name="Childs K.L."/>
            <person name="Davidson R.M."/>
            <person name="Lin H."/>
            <person name="Quesada-Ocampo L."/>
            <person name="Vaillancourt B."/>
            <person name="Sakai H."/>
            <person name="Lee S.S."/>
            <person name="Kim J."/>
            <person name="Numa H."/>
            <person name="Itoh T."/>
            <person name="Buell C.R."/>
            <person name="Matsumoto T."/>
        </authorList>
    </citation>
    <scope>GENOME REANNOTATION</scope>
    <source>
        <strain>cv. Nipponbare</strain>
    </source>
</reference>
<reference key="6">
    <citation type="submission" date="2006-10" db="EMBL/GenBank/DDBJ databases">
        <title>Oryza sativa full length cDNA.</title>
        <authorList>
            <consortium name="The rice full-length cDNA consortium"/>
        </authorList>
    </citation>
    <scope>NUCLEOTIDE SEQUENCE [LARGE SCALE MRNA] (ISOFORM 1)</scope>
    <source>
        <strain>cv. Nipponbare</strain>
    </source>
</reference>
<reference key="7">
    <citation type="journal article" date="2014" name="Plant J.">
        <title>Targeting MAGO proteins with a peptide aptamer reinforces their essential roles in multiple rice developmental pathways.</title>
        <authorList>
            <person name="Gong P."/>
            <person name="Quan H."/>
            <person name="He C."/>
        </authorList>
    </citation>
    <scope>FUNCTION</scope>
    <scope>INTERACTION WITH MAGO1</scope>
</reference>
<reference key="8">
    <citation type="journal article" date="2014" name="Plant Physiol.">
        <title>Uncovering divergence of rice exon junction complex core heterodimer gene duplication reveals their essential role in growth, development, and reproduction.</title>
        <authorList>
            <person name="Gong P."/>
            <person name="He C."/>
        </authorList>
    </citation>
    <scope>FUNCTION</scope>
    <scope>INTERACTION WITH MAGO1 AND MAGO2</scope>
    <scope>SUBCELLULAR LOCATION</scope>
</reference>
<comment type="function">
    <text evidence="1 5 6">Core component of the splicing-dependent multiprotein exon junction complex (EJC) deposited at splice junctions on mRNAs. The EJC is a dynamic structure consisting of core proteins and several peripheral nuclear and cytoplasmic associated factors that join the complex only transiently either during EJC assembly or during subsequent mRNA metabolism. The EJC marks the position of the exon-exon junction in the mature mRNA for the gene expression machinery and the core components remain bound to spliced mRNAs throughout all stages of mRNA metabolism thereby influencing downstream processes including nuclear mRNA export, subcellular mRNA localization, translation efficiency and nonsense-mediated mRNA decay (NMD). The MAGO-Y14 heterodimer inhibits the ATPase activity of EIF4A3, thereby trapping the ATP-bound EJC core onto spliced mRNA in a stable conformation. The MAGO-Y14 heterodimer interacts with the EJC key regulator PYM leading to EJC disassembly in the cytoplasm (By similarity). EJC core heterodimers play essential roles in plant growth and development, and pollen and seed development (PubMed:24820023, PubMed:25230811). The MAGO-Y14 heterodimer selectively binds to the UDT1 (UNDEVELOPED TAPETUM 1) pre-mRNA transcript and regulates the splicing of UDT1, a key regulator in stamen development (PubMed:24820023).</text>
</comment>
<comment type="subunit">
    <text evidence="4 5 6 9">Heterodimer with MAGO1 (PubMed:24416299, PubMed:24820023, PubMed:25230811). Heterodimer with MAGO2 (PubMed:24416299, PubMed:24820023). Part of the mRNA splicing-dependent exon junction complex (EJC); the core complex contains MLN51/CASC3, EIF4A3, MAGO and Y14 (Probable).</text>
</comment>
<comment type="subcellular location">
    <subcellularLocation>
        <location evidence="5">Nucleus</location>
    </subcellularLocation>
    <subcellularLocation>
        <location evidence="1">Cytoplasm</location>
    </subcellularLocation>
    <text evidence="1">Nucleocytoplasmic shuttling protein. Travels to the cytoplasm as part of the exon junction complex (EJC) bound to mRNA.</text>
</comment>
<comment type="alternative products">
    <event type="alternative splicing"/>
    <isoform>
        <id>B7FAL5-1</id>
        <name>1</name>
        <sequence type="displayed"/>
    </isoform>
    <isoform>
        <id>B7FAL5-2</id>
        <name>2</name>
        <sequence type="described" ref="VSP_058950"/>
    </isoform>
    <isoform>
        <id>B7FAL5-3</id>
        <name>3</name>
        <sequence type="described" ref="VSP_058949"/>
    </isoform>
</comment>
<comment type="similarity">
    <text evidence="8">Belongs to the RBM8A family.</text>
</comment>
<comment type="sequence caution" evidence="8">
    <conflict type="erroneous gene model prediction">
        <sequence resource="EMBL-CDS" id="AAU10777"/>
    </conflict>
</comment>
<gene>
    <name evidence="7" type="primary">Y14A</name>
    <name evidence="7" type="synonym">RBM8</name>
    <name evidence="11" type="ordered locus">Os05g0140500</name>
    <name evidence="8" type="ordered locus">LOC_Os05g04850</name>
    <name evidence="10" type="ORF">OSJNBb0111O13.11</name>
</gene>
<evidence type="ECO:0000250" key="1">
    <source>
        <dbReference type="UniProtKB" id="Q9Y5S9"/>
    </source>
</evidence>
<evidence type="ECO:0000255" key="2">
    <source>
        <dbReference type="PROSITE-ProRule" id="PRU00176"/>
    </source>
</evidence>
<evidence type="ECO:0000256" key="3">
    <source>
        <dbReference type="SAM" id="MobiDB-lite"/>
    </source>
</evidence>
<evidence type="ECO:0000269" key="4">
    <source>
    </source>
</evidence>
<evidence type="ECO:0000269" key="5">
    <source>
    </source>
</evidence>
<evidence type="ECO:0000269" key="6">
    <source>
    </source>
</evidence>
<evidence type="ECO:0000303" key="7">
    <source>
    </source>
</evidence>
<evidence type="ECO:0000305" key="8"/>
<evidence type="ECO:0000305" key="9">
    <source>
    </source>
</evidence>
<evidence type="ECO:0000312" key="10">
    <source>
        <dbReference type="EMBL" id="AAU10777.1"/>
    </source>
</evidence>
<evidence type="ECO:0000312" key="11">
    <source>
        <dbReference type="EMBL" id="BAS92191.1"/>
    </source>
</evidence>
<feature type="chain" id="PRO_0000440125" description="RNA-binding protein Y14A">
    <location>
        <begin position="1"/>
        <end position="204"/>
    </location>
</feature>
<feature type="domain" description="RRM" evidence="2">
    <location>
        <begin position="101"/>
        <end position="179"/>
    </location>
</feature>
<feature type="region of interest" description="Disordered" evidence="3">
    <location>
        <begin position="1"/>
        <end position="92"/>
    </location>
</feature>
<feature type="compositionally biased region" description="Acidic residues" evidence="3">
    <location>
        <begin position="10"/>
        <end position="27"/>
    </location>
</feature>
<feature type="compositionally biased region" description="Gly residues" evidence="3">
    <location>
        <begin position="42"/>
        <end position="52"/>
    </location>
</feature>
<feature type="compositionally biased region" description="Basic and acidic residues" evidence="3">
    <location>
        <begin position="62"/>
        <end position="73"/>
    </location>
</feature>
<feature type="splice variant" id="VSP_058949" description="In isoform 3.">
    <location>
        <begin position="13"/>
        <end position="81"/>
    </location>
</feature>
<feature type="splice variant" id="VSP_058950" description="In isoform 2.">
    <original>GYALIEYETFEEAQAAIKALDGTELLTQIISVDWAFSNGPVKRRNIRKRSPRRSRSPPRRRY</original>
    <variation>VCLFQYCNVSSPVAAL</variation>
    <location>
        <begin position="143"/>
        <end position="204"/>
    </location>
</feature>
<keyword id="KW-0025">Alternative splicing</keyword>
<keyword id="KW-0963">Cytoplasm</keyword>
<keyword id="KW-0507">mRNA processing</keyword>
<keyword id="KW-0508">mRNA splicing</keyword>
<keyword id="KW-0509">mRNA transport</keyword>
<keyword id="KW-0866">Nonsense-mediated mRNA decay</keyword>
<keyword id="KW-0539">Nucleus</keyword>
<keyword id="KW-1185">Reference proteome</keyword>
<keyword id="KW-0694">RNA-binding</keyword>
<keyword id="KW-0810">Translation regulation</keyword>
<keyword id="KW-0813">Transport</keyword>
<dbReference type="EMBL" id="KF051016">
    <property type="protein sequence ID" value="AHX83802.1"/>
    <property type="molecule type" value="mRNA"/>
</dbReference>
<dbReference type="EMBL" id="AC137621">
    <property type="protein sequence ID" value="AAU10777.1"/>
    <property type="status" value="ALT_SEQ"/>
    <property type="molecule type" value="Genomic_DNA"/>
</dbReference>
<dbReference type="EMBL" id="AP008211">
    <property type="protein sequence ID" value="BAF16512.2"/>
    <property type="molecule type" value="Genomic_DNA"/>
</dbReference>
<dbReference type="EMBL" id="AP014961">
    <property type="protein sequence ID" value="BAS92190.1"/>
    <property type="molecule type" value="Genomic_DNA"/>
</dbReference>
<dbReference type="EMBL" id="AP014961">
    <property type="protein sequence ID" value="BAS92191.1"/>
    <property type="molecule type" value="Genomic_DNA"/>
</dbReference>
<dbReference type="EMBL" id="AK243594">
    <property type="protein sequence ID" value="BAH01663.1"/>
    <property type="molecule type" value="mRNA"/>
</dbReference>
<dbReference type="RefSeq" id="XP_015637539.1">
    <property type="nucleotide sequence ID" value="XM_015782053.1"/>
</dbReference>
<dbReference type="SMR" id="B7FAL5"/>
<dbReference type="FunCoup" id="B7FAL5">
    <property type="interactions" value="3219"/>
</dbReference>
<dbReference type="STRING" id="39947.B7FAL5"/>
<dbReference type="PaxDb" id="39947-B7FAL5"/>
<dbReference type="EnsemblPlants" id="Os05t0140500-01">
    <molecule id="B7FAL5-1"/>
    <property type="protein sequence ID" value="Os05t0140500-01"/>
    <property type="gene ID" value="Os05g0140500"/>
</dbReference>
<dbReference type="Gramene" id="Os05t0140500-01">
    <molecule id="B7FAL5-1"/>
    <property type="protein sequence ID" value="Os05t0140500-01"/>
    <property type="gene ID" value="Os05g0140500"/>
</dbReference>
<dbReference type="KEGG" id="dosa:Os05g0140500"/>
<dbReference type="eggNOG" id="KOG0130">
    <property type="taxonomic scope" value="Eukaryota"/>
</dbReference>
<dbReference type="HOGENOM" id="CLU_012062_18_1_1"/>
<dbReference type="InParanoid" id="B7FAL5"/>
<dbReference type="OMA" id="DAIEGWI"/>
<dbReference type="OrthoDB" id="15688at2759"/>
<dbReference type="Proteomes" id="UP000000763">
    <property type="component" value="Chromosome 5"/>
</dbReference>
<dbReference type="Proteomes" id="UP000059680">
    <property type="component" value="Chromosome 5"/>
</dbReference>
<dbReference type="GO" id="GO:0005737">
    <property type="term" value="C:cytoplasm"/>
    <property type="evidence" value="ECO:0007669"/>
    <property type="project" value="UniProtKB-SubCell"/>
</dbReference>
<dbReference type="GO" id="GO:0035145">
    <property type="term" value="C:exon-exon junction complex"/>
    <property type="evidence" value="ECO:0000318"/>
    <property type="project" value="GO_Central"/>
</dbReference>
<dbReference type="GO" id="GO:0003729">
    <property type="term" value="F:mRNA binding"/>
    <property type="evidence" value="ECO:0000318"/>
    <property type="project" value="GO_Central"/>
</dbReference>
<dbReference type="GO" id="GO:0006397">
    <property type="term" value="P:mRNA processing"/>
    <property type="evidence" value="ECO:0007669"/>
    <property type="project" value="UniProtKB-KW"/>
</dbReference>
<dbReference type="GO" id="GO:0051028">
    <property type="term" value="P:mRNA transport"/>
    <property type="evidence" value="ECO:0007669"/>
    <property type="project" value="UniProtKB-KW"/>
</dbReference>
<dbReference type="GO" id="GO:0000184">
    <property type="term" value="P:nuclear-transcribed mRNA catabolic process, nonsense-mediated decay"/>
    <property type="evidence" value="ECO:0007669"/>
    <property type="project" value="UniProtKB-KW"/>
</dbReference>
<dbReference type="GO" id="GO:0010628">
    <property type="term" value="P:positive regulation of gene expression"/>
    <property type="evidence" value="ECO:0007669"/>
    <property type="project" value="EnsemblPlants"/>
</dbReference>
<dbReference type="GO" id="GO:0006417">
    <property type="term" value="P:regulation of translation"/>
    <property type="evidence" value="ECO:0007669"/>
    <property type="project" value="UniProtKB-KW"/>
</dbReference>
<dbReference type="GO" id="GO:0008380">
    <property type="term" value="P:RNA splicing"/>
    <property type="evidence" value="ECO:0000318"/>
    <property type="project" value="GO_Central"/>
</dbReference>
<dbReference type="CDD" id="cd12324">
    <property type="entry name" value="RRM_RBM8"/>
    <property type="match status" value="1"/>
</dbReference>
<dbReference type="FunFam" id="3.30.70.330:FF:000525">
    <property type="entry name" value="RNA-binding protein 8A"/>
    <property type="match status" value="1"/>
</dbReference>
<dbReference type="Gene3D" id="3.30.70.330">
    <property type="match status" value="1"/>
</dbReference>
<dbReference type="InterPro" id="IPR012677">
    <property type="entry name" value="Nucleotide-bd_a/b_plait_sf"/>
</dbReference>
<dbReference type="InterPro" id="IPR035979">
    <property type="entry name" value="RBD_domain_sf"/>
</dbReference>
<dbReference type="InterPro" id="IPR008111">
    <property type="entry name" value="RNA-bd_8"/>
</dbReference>
<dbReference type="InterPro" id="IPR000504">
    <property type="entry name" value="RRM_dom"/>
</dbReference>
<dbReference type="InterPro" id="IPR033744">
    <property type="entry name" value="RRM_RBM8"/>
</dbReference>
<dbReference type="PANTHER" id="PTHR45894">
    <property type="entry name" value="RNA-BINDING PROTEIN 8A"/>
    <property type="match status" value="1"/>
</dbReference>
<dbReference type="Pfam" id="PF00076">
    <property type="entry name" value="RRM_1"/>
    <property type="match status" value="1"/>
</dbReference>
<dbReference type="PRINTS" id="PR01738">
    <property type="entry name" value="RNABINDINGM8"/>
</dbReference>
<dbReference type="SMART" id="SM00360">
    <property type="entry name" value="RRM"/>
    <property type="match status" value="1"/>
</dbReference>
<dbReference type="SUPFAM" id="SSF54928">
    <property type="entry name" value="RNA-binding domain, RBD"/>
    <property type="match status" value="1"/>
</dbReference>
<dbReference type="PROSITE" id="PS50102">
    <property type="entry name" value="RRM"/>
    <property type="match status" value="1"/>
</dbReference>
<name>Y14A_ORYSJ</name>
<protein>
    <recommendedName>
        <fullName evidence="8">RNA-binding protein Y14A</fullName>
        <shortName evidence="7">OsY14a</shortName>
    </recommendedName>
    <alternativeName>
        <fullName evidence="8">RNA-binding protein 8A</fullName>
    </alternativeName>
</protein>
<accession>B7FAL5</accession>
<accession>A0A023T669</accession>
<accession>Q0DKW1</accession>
<accession>Q688D4</accession>